<accession>A1AAC5</accession>
<feature type="signal peptide" evidence="1">
    <location>
        <begin position="1"/>
        <end position="30"/>
    </location>
</feature>
<feature type="chain" id="PRO_1000064452" description="Periplasmic trehalase">
    <location>
        <begin position="31"/>
        <end position="565"/>
    </location>
</feature>
<feature type="region of interest" description="Disordered" evidence="2">
    <location>
        <begin position="539"/>
        <end position="565"/>
    </location>
</feature>
<feature type="active site" description="Proton donor/acceptor" evidence="1">
    <location>
        <position position="312"/>
    </location>
</feature>
<feature type="active site" description="Proton donor/acceptor" evidence="1">
    <location>
        <position position="496"/>
    </location>
</feature>
<feature type="binding site" evidence="1">
    <location>
        <position position="152"/>
    </location>
    <ligand>
        <name>substrate</name>
    </ligand>
</feature>
<feature type="binding site" evidence="1">
    <location>
        <begin position="159"/>
        <end position="160"/>
    </location>
    <ligand>
        <name>substrate</name>
    </ligand>
</feature>
<feature type="binding site" evidence="1">
    <location>
        <position position="196"/>
    </location>
    <ligand>
        <name>substrate</name>
    </ligand>
</feature>
<feature type="binding site" evidence="1">
    <location>
        <begin position="205"/>
        <end position="207"/>
    </location>
    <ligand>
        <name>substrate</name>
    </ligand>
</feature>
<feature type="binding site" evidence="1">
    <location>
        <begin position="277"/>
        <end position="279"/>
    </location>
    <ligand>
        <name>substrate</name>
    </ligand>
</feature>
<feature type="binding site" evidence="1">
    <location>
        <position position="310"/>
    </location>
    <ligand>
        <name>substrate</name>
    </ligand>
</feature>
<feature type="binding site" evidence="1">
    <location>
        <position position="511"/>
    </location>
    <ligand>
        <name>substrate</name>
    </ligand>
</feature>
<name>TREA_ECOK1</name>
<proteinExistence type="inferred from homology"/>
<reference key="1">
    <citation type="journal article" date="2007" name="J. Bacteriol.">
        <title>The genome sequence of avian pathogenic Escherichia coli strain O1:K1:H7 shares strong similarities with human extraintestinal pathogenic E. coli genomes.</title>
        <authorList>
            <person name="Johnson T.J."/>
            <person name="Kariyawasam S."/>
            <person name="Wannemuehler Y."/>
            <person name="Mangiamele P."/>
            <person name="Johnson S.J."/>
            <person name="Doetkott C."/>
            <person name="Skyberg J.A."/>
            <person name="Lynne A.M."/>
            <person name="Johnson J.R."/>
            <person name="Nolan L.K."/>
        </authorList>
    </citation>
    <scope>NUCLEOTIDE SEQUENCE [LARGE SCALE GENOMIC DNA]</scope>
</reference>
<comment type="function">
    <text evidence="1">Provides the cells with the ability to utilize trehalose at high osmolarity by splitting it into glucose molecules that can subsequently be taken up by the phosphotransferase-mediated uptake system.</text>
</comment>
<comment type="catalytic activity">
    <reaction evidence="1">
        <text>alpha,alpha-trehalose + H2O = alpha-D-glucose + beta-D-glucose</text>
        <dbReference type="Rhea" id="RHEA:32675"/>
        <dbReference type="ChEBI" id="CHEBI:15377"/>
        <dbReference type="ChEBI" id="CHEBI:15903"/>
        <dbReference type="ChEBI" id="CHEBI:16551"/>
        <dbReference type="ChEBI" id="CHEBI:17925"/>
        <dbReference type="EC" id="3.2.1.28"/>
    </reaction>
</comment>
<comment type="subunit">
    <text evidence="1">Monomer.</text>
</comment>
<comment type="subcellular location">
    <subcellularLocation>
        <location evidence="1">Periplasm</location>
    </subcellularLocation>
</comment>
<comment type="similarity">
    <text evidence="1">Belongs to the glycosyl hydrolase 37 family.</text>
</comment>
<protein>
    <recommendedName>
        <fullName evidence="1">Periplasmic trehalase</fullName>
        <ecNumber evidence="1">3.2.1.28</ecNumber>
    </recommendedName>
    <alternativeName>
        <fullName evidence="1">Alpha,alpha-trehalase</fullName>
    </alternativeName>
    <alternativeName>
        <fullName evidence="1">Alpha,alpha-trehalose glucohydrolase</fullName>
    </alternativeName>
</protein>
<dbReference type="EC" id="3.2.1.28" evidence="1"/>
<dbReference type="EMBL" id="CP000468">
    <property type="protein sequence ID" value="ABJ00615.1"/>
    <property type="molecule type" value="Genomic_DNA"/>
</dbReference>
<dbReference type="RefSeq" id="WP_000841734.1">
    <property type="nucleotide sequence ID" value="NC_008563.1"/>
</dbReference>
<dbReference type="SMR" id="A1AAC5"/>
<dbReference type="CAZy" id="GH37">
    <property type="family name" value="Glycoside Hydrolase Family 37"/>
</dbReference>
<dbReference type="KEGG" id="ecv:APECO1_314"/>
<dbReference type="HOGENOM" id="CLU_006451_3_1_6"/>
<dbReference type="Proteomes" id="UP000008216">
    <property type="component" value="Chromosome"/>
</dbReference>
<dbReference type="GO" id="GO:0042597">
    <property type="term" value="C:periplasmic space"/>
    <property type="evidence" value="ECO:0007669"/>
    <property type="project" value="UniProtKB-SubCell"/>
</dbReference>
<dbReference type="GO" id="GO:0004555">
    <property type="term" value="F:alpha,alpha-trehalase activity"/>
    <property type="evidence" value="ECO:0007669"/>
    <property type="project" value="UniProtKB-UniRule"/>
</dbReference>
<dbReference type="GO" id="GO:0071474">
    <property type="term" value="P:cellular hyperosmotic response"/>
    <property type="evidence" value="ECO:0007669"/>
    <property type="project" value="InterPro"/>
</dbReference>
<dbReference type="GO" id="GO:0005993">
    <property type="term" value="P:trehalose catabolic process"/>
    <property type="evidence" value="ECO:0007669"/>
    <property type="project" value="InterPro"/>
</dbReference>
<dbReference type="FunFam" id="1.50.10.10:FF:000003">
    <property type="entry name" value="Cytoplasmic trehalase"/>
    <property type="match status" value="1"/>
</dbReference>
<dbReference type="Gene3D" id="1.50.10.10">
    <property type="match status" value="1"/>
</dbReference>
<dbReference type="HAMAP" id="MF_01060">
    <property type="entry name" value="Peripl_trehalase"/>
    <property type="match status" value="1"/>
</dbReference>
<dbReference type="InterPro" id="IPR008928">
    <property type="entry name" value="6-hairpin_glycosidase_sf"/>
</dbReference>
<dbReference type="InterPro" id="IPR012341">
    <property type="entry name" value="6hp_glycosidase-like_sf"/>
</dbReference>
<dbReference type="InterPro" id="IPR001661">
    <property type="entry name" value="Glyco_hydro_37"/>
</dbReference>
<dbReference type="InterPro" id="IPR018232">
    <property type="entry name" value="Glyco_hydro_37_CS"/>
</dbReference>
<dbReference type="InterPro" id="IPR023720">
    <property type="entry name" value="Trehalase_periplasmic"/>
</dbReference>
<dbReference type="NCBIfam" id="NF009773">
    <property type="entry name" value="PRK13270.1"/>
    <property type="match status" value="1"/>
</dbReference>
<dbReference type="NCBIfam" id="NF009774">
    <property type="entry name" value="PRK13271.1"/>
    <property type="match status" value="1"/>
</dbReference>
<dbReference type="PANTHER" id="PTHR23403">
    <property type="entry name" value="TREHALASE"/>
    <property type="match status" value="1"/>
</dbReference>
<dbReference type="PANTHER" id="PTHR23403:SF1">
    <property type="entry name" value="TREHALASE"/>
    <property type="match status" value="1"/>
</dbReference>
<dbReference type="Pfam" id="PF01204">
    <property type="entry name" value="Trehalase"/>
    <property type="match status" value="1"/>
</dbReference>
<dbReference type="PRINTS" id="PR00744">
    <property type="entry name" value="GLHYDRLASE37"/>
</dbReference>
<dbReference type="SUPFAM" id="SSF48208">
    <property type="entry name" value="Six-hairpin glycosidases"/>
    <property type="match status" value="1"/>
</dbReference>
<dbReference type="PROSITE" id="PS00927">
    <property type="entry name" value="TREHALASE_1"/>
    <property type="match status" value="1"/>
</dbReference>
<dbReference type="PROSITE" id="PS00928">
    <property type="entry name" value="TREHALASE_2"/>
    <property type="match status" value="1"/>
</dbReference>
<gene>
    <name evidence="1" type="primary">treA</name>
    <name type="ordered locus">Ecok1_11210</name>
    <name type="ORF">APECO1_314</name>
</gene>
<organism>
    <name type="scientific">Escherichia coli O1:K1 / APEC</name>
    <dbReference type="NCBI Taxonomy" id="405955"/>
    <lineage>
        <taxon>Bacteria</taxon>
        <taxon>Pseudomonadati</taxon>
        <taxon>Pseudomonadota</taxon>
        <taxon>Gammaproteobacteria</taxon>
        <taxon>Enterobacterales</taxon>
        <taxon>Enterobacteriaceae</taxon>
        <taxon>Escherichia</taxon>
    </lineage>
</organism>
<sequence length="565" mass="63748">MKSPAPSRPQKMALIPACIFLCFAALSVQAEETSVTPQPPDILLGPLFNDVQNAKLFPDQKTFADAVPNSDPLMILADYRIQQNQSGFDLRHFVNVNFTLPKEGEKYVPPEGQSLREHIDGLWPVLTRSTENTEKWDSLLPLPKPYVVPGGRFREVYYWDSYFTMLGLAESGHWDKVADMVANFAHEIDNYGHIPNGNRSYYLSRSQPPFFALMVELLAQHEGDAALKQYLPQMQKEYAYWMDGVENLQAGQQEKRVVKLQDGTLLNRYWDDRDTPRPESWVEDIATAKSNPNRPATEIYRDLRSAAASGWDFSSRWMDNPQQLNTLRTTSIVPVDLNSLMFKMEKILARASKAIGDNAMANQYETLANARQKGIEKYLWNDQQGWYADYDLKSHKVRNQLTAAALFPLYVNAAAKDRASKMATATKTHLLQPGGLNTTSVKSGQQWDAPNGWAPLQWVATEGLQNYGQKEVAMDISWHFLTNVQHTYDREKKLVEKYDVSTTGTGGGGGEYPLQDGFGWTNGVTLKMLDLICPKEQPCDNVPATRPLSESTTQPLKQKEAEPTP</sequence>
<keyword id="KW-0326">Glycosidase</keyword>
<keyword id="KW-0378">Hydrolase</keyword>
<keyword id="KW-0574">Periplasm</keyword>
<keyword id="KW-1185">Reference proteome</keyword>
<keyword id="KW-0732">Signal</keyword>
<evidence type="ECO:0000255" key="1">
    <source>
        <dbReference type="HAMAP-Rule" id="MF_01060"/>
    </source>
</evidence>
<evidence type="ECO:0000256" key="2">
    <source>
        <dbReference type="SAM" id="MobiDB-lite"/>
    </source>
</evidence>